<sequence>MKLHSLISVLLLFVTLIPKGKTGVIPGQKQCIALKGVCRDKLCSTLDDTIGICNEGKKCCRRWWILEPYPTPVPKGKSP</sequence>
<accession>P0DP73</accession>
<accession>Q30KQ2</accession>
<comment type="function">
    <text evidence="3">Antimicrobial host-defense peptide. Has an antiplasmodial activity.</text>
</comment>
<comment type="subcellular location">
    <subcellularLocation>
        <location evidence="4">Secreted</location>
    </subcellularLocation>
</comment>
<comment type="tissue specificity">
    <text evidence="3">Expressed on differentiated macrophage phagocytizing plasmodium falciparum-parasitized erythrocytes.</text>
</comment>
<comment type="similarity">
    <text evidence="4">Belongs to the beta-defensin family.</text>
</comment>
<evidence type="ECO:0000250" key="1"/>
<evidence type="ECO:0000255" key="2"/>
<evidence type="ECO:0000269" key="3">
    <source>
    </source>
</evidence>
<evidence type="ECO:0000305" key="4"/>
<evidence type="ECO:0000312" key="5">
    <source>
        <dbReference type="HGNC" id="HGNC:39814"/>
    </source>
</evidence>
<name>D130B_HUMAN</name>
<organism>
    <name type="scientific">Homo sapiens</name>
    <name type="common">Human</name>
    <dbReference type="NCBI Taxonomy" id="9606"/>
    <lineage>
        <taxon>Eukaryota</taxon>
        <taxon>Metazoa</taxon>
        <taxon>Chordata</taxon>
        <taxon>Craniata</taxon>
        <taxon>Vertebrata</taxon>
        <taxon>Euteleostomi</taxon>
        <taxon>Mammalia</taxon>
        <taxon>Eutheria</taxon>
        <taxon>Euarchontoglires</taxon>
        <taxon>Primates</taxon>
        <taxon>Haplorrhini</taxon>
        <taxon>Catarrhini</taxon>
        <taxon>Hominidae</taxon>
        <taxon>Homo</taxon>
    </lineage>
</organism>
<dbReference type="EMBL" id="AC130366">
    <property type="status" value="NOT_ANNOTATED_CDS"/>
    <property type="molecule type" value="Genomic_DNA"/>
</dbReference>
<dbReference type="CCDS" id="CCDS56524.1"/>
<dbReference type="RefSeq" id="NP_001182186.1">
    <property type="nucleotide sequence ID" value="NM_001195257.1"/>
</dbReference>
<dbReference type="SMR" id="P0DP73"/>
<dbReference type="FunCoup" id="P0DP73">
    <property type="interactions" value="235"/>
</dbReference>
<dbReference type="GlyGen" id="P0DP73">
    <property type="glycosylation" value="2 sites, 1 O-linked glycan (1 site)"/>
</dbReference>
<dbReference type="BioMuta" id="DEFB130B"/>
<dbReference type="MassIVE" id="P0DP73"/>
<dbReference type="DNASU" id="245940"/>
<dbReference type="Ensembl" id="ENST00000437818.1">
    <property type="protein sequence ID" value="ENSP00000392568.1"/>
    <property type="gene ID" value="ENSG00000233050.1"/>
</dbReference>
<dbReference type="Ensembl" id="ENST00000646760.1">
    <property type="protein sequence ID" value="ENSP00000495606.1"/>
    <property type="gene ID" value="ENSG00000285249.1"/>
</dbReference>
<dbReference type="GeneID" id="100133267"/>
<dbReference type="KEGG" id="hsa:100133267"/>
<dbReference type="KEGG" id="hsa:245940"/>
<dbReference type="MANE-Select" id="ENST00000437818.1">
    <property type="protein sequence ID" value="ENSP00000392568.1"/>
    <property type="RefSeq nucleotide sequence ID" value="NM_001195257.1"/>
    <property type="RefSeq protein sequence ID" value="NP_001182186.1"/>
</dbReference>
<dbReference type="AGR" id="HGNC:18107"/>
<dbReference type="AGR" id="HGNC:39814"/>
<dbReference type="CTD" id="100133267"/>
<dbReference type="CTD" id="245940"/>
<dbReference type="DisGeNET" id="100133267"/>
<dbReference type="GeneCards" id="DEFB130B"/>
<dbReference type="HGNC" id="HGNC:39814">
    <property type="gene designation" value="DEFB130B"/>
</dbReference>
<dbReference type="HPA" id="ENSG00000233050">
    <property type="expression patterns" value="Tissue enriched (epididymis)"/>
</dbReference>
<dbReference type="neXtProt" id="NX_P0DP73"/>
<dbReference type="VEuPathDB" id="HostDB:ENSG00000233050"/>
<dbReference type="InParanoid" id="P0DP73"/>
<dbReference type="OMA" id="TIGVCND"/>
<dbReference type="OrthoDB" id="9542609at2759"/>
<dbReference type="PAN-GO" id="P0DP73">
    <property type="GO annotations" value="5 GO annotations based on evolutionary models"/>
</dbReference>
<dbReference type="PathwayCommons" id="P0DP73"/>
<dbReference type="Reactome" id="R-HSA-1461957">
    <property type="pathway name" value="Beta defensins"/>
</dbReference>
<dbReference type="Reactome" id="R-HSA-1461973">
    <property type="pathway name" value="Defensins"/>
</dbReference>
<dbReference type="Pharos" id="P0DP73">
    <property type="development level" value="Tdark"/>
</dbReference>
<dbReference type="PRO" id="PR:P0DP73"/>
<dbReference type="Proteomes" id="UP000005640">
    <property type="component" value="Chromosome 8"/>
</dbReference>
<dbReference type="RNAct" id="P0DP73">
    <property type="molecule type" value="protein"/>
</dbReference>
<dbReference type="Bgee" id="ENSG00000233050">
    <property type="expression patterns" value="Expressed in urinary bladder and 3 other cell types or tissues"/>
</dbReference>
<dbReference type="GO" id="GO:0005615">
    <property type="term" value="C:extracellular space"/>
    <property type="evidence" value="ECO:0000318"/>
    <property type="project" value="GO_Central"/>
</dbReference>
<dbReference type="GO" id="GO:0031731">
    <property type="term" value="F:CCR6 chemokine receptor binding"/>
    <property type="evidence" value="ECO:0000318"/>
    <property type="project" value="GO_Central"/>
</dbReference>
<dbReference type="GO" id="GO:0042056">
    <property type="term" value="F:chemoattractant activity"/>
    <property type="evidence" value="ECO:0000318"/>
    <property type="project" value="GO_Central"/>
</dbReference>
<dbReference type="GO" id="GO:0060326">
    <property type="term" value="P:cell chemotaxis"/>
    <property type="evidence" value="ECO:0000318"/>
    <property type="project" value="GO_Central"/>
</dbReference>
<dbReference type="GO" id="GO:0042742">
    <property type="term" value="P:defense response to bacterium"/>
    <property type="evidence" value="ECO:0000318"/>
    <property type="project" value="GO_Central"/>
</dbReference>
<dbReference type="InterPro" id="IPR001855">
    <property type="entry name" value="Defensin_beta-like"/>
</dbReference>
<dbReference type="PANTHER" id="PTHR20515">
    <property type="entry name" value="BETA-DEFENSIN"/>
    <property type="match status" value="1"/>
</dbReference>
<dbReference type="PANTHER" id="PTHR20515:SF1">
    <property type="entry name" value="BETA-DEFENSIN 130A-RELATED"/>
    <property type="match status" value="1"/>
</dbReference>
<dbReference type="Pfam" id="PF00711">
    <property type="entry name" value="Defensin_beta"/>
    <property type="match status" value="1"/>
</dbReference>
<dbReference type="SUPFAM" id="SSF57392">
    <property type="entry name" value="Defensin-like"/>
    <property type="match status" value="1"/>
</dbReference>
<feature type="signal peptide" evidence="2">
    <location>
        <begin position="1"/>
        <end position="22"/>
    </location>
</feature>
<feature type="chain" id="PRO_0000440984" description="Beta-defensin 130B">
    <location>
        <begin position="23"/>
        <end position="79"/>
    </location>
</feature>
<feature type="disulfide bond" evidence="1">
    <location>
        <begin position="38"/>
        <end position="53"/>
    </location>
</feature>
<feature type="disulfide bond" evidence="1">
    <location>
        <begin position="43"/>
        <end position="60"/>
    </location>
</feature>
<reference key="1">
    <citation type="journal article" date="2006" name="Nature">
        <title>DNA sequence and analysis of human chromosome 8.</title>
        <authorList>
            <person name="Nusbaum C."/>
            <person name="Mikkelsen T.S."/>
            <person name="Zody M.C."/>
            <person name="Asakawa S."/>
            <person name="Taudien S."/>
            <person name="Garber M."/>
            <person name="Kodira C.D."/>
            <person name="Schueler M.G."/>
            <person name="Shimizu A."/>
            <person name="Whittaker C.A."/>
            <person name="Chang J.L."/>
            <person name="Cuomo C.A."/>
            <person name="Dewar K."/>
            <person name="FitzGerald M.G."/>
            <person name="Yang X."/>
            <person name="Allen N.R."/>
            <person name="Anderson S."/>
            <person name="Asakawa T."/>
            <person name="Blechschmidt K."/>
            <person name="Bloom T."/>
            <person name="Borowsky M.L."/>
            <person name="Butler J."/>
            <person name="Cook A."/>
            <person name="Corum B."/>
            <person name="DeArellano K."/>
            <person name="DeCaprio D."/>
            <person name="Dooley K.T."/>
            <person name="Dorris L. III"/>
            <person name="Engels R."/>
            <person name="Gloeckner G."/>
            <person name="Hafez N."/>
            <person name="Hagopian D.S."/>
            <person name="Hall J.L."/>
            <person name="Ishikawa S.K."/>
            <person name="Jaffe D.B."/>
            <person name="Kamat A."/>
            <person name="Kudoh J."/>
            <person name="Lehmann R."/>
            <person name="Lokitsang T."/>
            <person name="Macdonald P."/>
            <person name="Major J.E."/>
            <person name="Matthews C.D."/>
            <person name="Mauceli E."/>
            <person name="Menzel U."/>
            <person name="Mihalev A.H."/>
            <person name="Minoshima S."/>
            <person name="Murayama Y."/>
            <person name="Naylor J.W."/>
            <person name="Nicol R."/>
            <person name="Nguyen C."/>
            <person name="O'Leary S.B."/>
            <person name="O'Neill K."/>
            <person name="Parker S.C.J."/>
            <person name="Polley A."/>
            <person name="Raymond C.K."/>
            <person name="Reichwald K."/>
            <person name="Rodriguez J."/>
            <person name="Sasaki T."/>
            <person name="Schilhabel M."/>
            <person name="Siddiqui R."/>
            <person name="Smith C.L."/>
            <person name="Sneddon T.P."/>
            <person name="Talamas J.A."/>
            <person name="Tenzin P."/>
            <person name="Topham K."/>
            <person name="Venkataraman V."/>
            <person name="Wen G."/>
            <person name="Yamazaki S."/>
            <person name="Young S.K."/>
            <person name="Zeng Q."/>
            <person name="Zimmer A.R."/>
            <person name="Rosenthal A."/>
            <person name="Birren B.W."/>
            <person name="Platzer M."/>
            <person name="Shimizu N."/>
            <person name="Lander E.S."/>
        </authorList>
    </citation>
    <scope>NUCLEOTIDE SEQUENCE [LARGE SCALE GENOMIC DNA]</scope>
</reference>
<reference key="2">
    <citation type="journal article" date="2017" name="Sci. Rep.">
        <title>Involvement of beta-defensin 130 (DEFB130) in the macrophage microbicidal mechanisms for killing Plasmodium falciparum.</title>
        <authorList>
            <person name="Terkawi M.A."/>
            <person name="Takano R."/>
            <person name="Furukawa A."/>
            <person name="Murakoshi F."/>
            <person name="Kato K."/>
        </authorList>
    </citation>
    <scope>FUNCTION</scope>
    <scope>TISSUE SPECIFICITY</scope>
</reference>
<keyword id="KW-0044">Antibiotic</keyword>
<keyword id="KW-0929">Antimicrobial</keyword>
<keyword id="KW-0211">Defensin</keyword>
<keyword id="KW-1015">Disulfide bond</keyword>
<keyword id="KW-1185">Reference proteome</keyword>
<keyword id="KW-0964">Secreted</keyword>
<keyword id="KW-0732">Signal</keyword>
<gene>
    <name evidence="5" type="primary">DEFB130B</name>
</gene>
<protein>
    <recommendedName>
        <fullName evidence="4">Beta-defensin 130B</fullName>
    </recommendedName>
</protein>
<proteinExistence type="evidence at transcript level"/>